<organism>
    <name type="scientific">Rickettsia massiliae (strain Mtu5)</name>
    <dbReference type="NCBI Taxonomy" id="416276"/>
    <lineage>
        <taxon>Bacteria</taxon>
        <taxon>Pseudomonadati</taxon>
        <taxon>Pseudomonadota</taxon>
        <taxon>Alphaproteobacteria</taxon>
        <taxon>Rickettsiales</taxon>
        <taxon>Rickettsiaceae</taxon>
        <taxon>Rickettsieae</taxon>
        <taxon>Rickettsia</taxon>
        <taxon>spotted fever group</taxon>
    </lineage>
</organism>
<proteinExistence type="inferred from homology"/>
<gene>
    <name evidence="1" type="primary">acpS</name>
    <name type="ordered locus">RMA_0914</name>
</gene>
<comment type="function">
    <text evidence="1">Transfers the 4'-phosphopantetheine moiety from coenzyme A to a Ser of acyl-carrier-protein.</text>
</comment>
<comment type="catalytic activity">
    <reaction evidence="1">
        <text>apo-[ACP] + CoA = holo-[ACP] + adenosine 3',5'-bisphosphate + H(+)</text>
        <dbReference type="Rhea" id="RHEA:12068"/>
        <dbReference type="Rhea" id="RHEA-COMP:9685"/>
        <dbReference type="Rhea" id="RHEA-COMP:9690"/>
        <dbReference type="ChEBI" id="CHEBI:15378"/>
        <dbReference type="ChEBI" id="CHEBI:29999"/>
        <dbReference type="ChEBI" id="CHEBI:57287"/>
        <dbReference type="ChEBI" id="CHEBI:58343"/>
        <dbReference type="ChEBI" id="CHEBI:64479"/>
        <dbReference type="EC" id="2.7.8.7"/>
    </reaction>
</comment>
<comment type="cofactor">
    <cofactor evidence="1">
        <name>Mg(2+)</name>
        <dbReference type="ChEBI" id="CHEBI:18420"/>
    </cofactor>
</comment>
<comment type="subcellular location">
    <subcellularLocation>
        <location evidence="1">Cytoplasm</location>
    </subcellularLocation>
</comment>
<comment type="similarity">
    <text evidence="1">Belongs to the P-Pant transferase superfamily. AcpS family.</text>
</comment>
<protein>
    <recommendedName>
        <fullName evidence="1">Holo-[acyl-carrier-protein] synthase</fullName>
        <shortName evidence="1">Holo-ACP synthase</shortName>
        <ecNumber evidence="1">2.7.8.7</ecNumber>
    </recommendedName>
    <alternativeName>
        <fullName evidence="1">4'-phosphopantetheinyl transferase AcpS</fullName>
    </alternativeName>
</protein>
<sequence>MLIGVGTDIVQIPRIEKILHLYPELFAKKILTSQELKQFVLLGKIHHAAFLAKRFAAKEAVSKAFGVGIGQGINFKDITILNNDLGKPIVEVSSNYTNKLSPFNIHLSLADDYPVCVAFAVIESSYNVILG</sequence>
<keyword id="KW-0963">Cytoplasm</keyword>
<keyword id="KW-0275">Fatty acid biosynthesis</keyword>
<keyword id="KW-0276">Fatty acid metabolism</keyword>
<keyword id="KW-0444">Lipid biosynthesis</keyword>
<keyword id="KW-0443">Lipid metabolism</keyword>
<keyword id="KW-0460">Magnesium</keyword>
<keyword id="KW-0479">Metal-binding</keyword>
<keyword id="KW-0808">Transferase</keyword>
<dbReference type="EC" id="2.7.8.7" evidence="1"/>
<dbReference type="EMBL" id="CP000683">
    <property type="protein sequence ID" value="ABV84993.1"/>
    <property type="molecule type" value="Genomic_DNA"/>
</dbReference>
<dbReference type="RefSeq" id="WP_012152965.1">
    <property type="nucleotide sequence ID" value="NC_009900.1"/>
</dbReference>
<dbReference type="SMR" id="A8F257"/>
<dbReference type="KEGG" id="rms:RMA_0914"/>
<dbReference type="HOGENOM" id="CLU_089696_3_1_5"/>
<dbReference type="Proteomes" id="UP000001311">
    <property type="component" value="Chromosome"/>
</dbReference>
<dbReference type="GO" id="GO:0005737">
    <property type="term" value="C:cytoplasm"/>
    <property type="evidence" value="ECO:0007669"/>
    <property type="project" value="UniProtKB-SubCell"/>
</dbReference>
<dbReference type="GO" id="GO:0008897">
    <property type="term" value="F:holo-[acyl-carrier-protein] synthase activity"/>
    <property type="evidence" value="ECO:0007669"/>
    <property type="project" value="UniProtKB-UniRule"/>
</dbReference>
<dbReference type="GO" id="GO:0000287">
    <property type="term" value="F:magnesium ion binding"/>
    <property type="evidence" value="ECO:0007669"/>
    <property type="project" value="UniProtKB-UniRule"/>
</dbReference>
<dbReference type="GO" id="GO:0006633">
    <property type="term" value="P:fatty acid biosynthetic process"/>
    <property type="evidence" value="ECO:0007669"/>
    <property type="project" value="UniProtKB-UniRule"/>
</dbReference>
<dbReference type="Gene3D" id="3.90.470.20">
    <property type="entry name" value="4'-phosphopantetheinyl transferase domain"/>
    <property type="match status" value="1"/>
</dbReference>
<dbReference type="HAMAP" id="MF_00101">
    <property type="entry name" value="AcpS"/>
    <property type="match status" value="1"/>
</dbReference>
<dbReference type="InterPro" id="IPR008278">
    <property type="entry name" value="4-PPantetheinyl_Trfase_dom"/>
</dbReference>
<dbReference type="InterPro" id="IPR037143">
    <property type="entry name" value="4-PPantetheinyl_Trfase_dom_sf"/>
</dbReference>
<dbReference type="InterPro" id="IPR002582">
    <property type="entry name" value="ACPS"/>
</dbReference>
<dbReference type="InterPro" id="IPR004568">
    <property type="entry name" value="Ppantetheine-prot_Trfase_dom"/>
</dbReference>
<dbReference type="NCBIfam" id="TIGR00516">
    <property type="entry name" value="acpS"/>
    <property type="match status" value="1"/>
</dbReference>
<dbReference type="NCBIfam" id="TIGR00556">
    <property type="entry name" value="pantethn_trn"/>
    <property type="match status" value="1"/>
</dbReference>
<dbReference type="Pfam" id="PF01648">
    <property type="entry name" value="ACPS"/>
    <property type="match status" value="1"/>
</dbReference>
<dbReference type="SUPFAM" id="SSF56214">
    <property type="entry name" value="4'-phosphopantetheinyl transferase"/>
    <property type="match status" value="1"/>
</dbReference>
<evidence type="ECO:0000255" key="1">
    <source>
        <dbReference type="HAMAP-Rule" id="MF_00101"/>
    </source>
</evidence>
<name>ACPS_RICM5</name>
<reference key="1">
    <citation type="journal article" date="2007" name="Genome Res.">
        <title>Lateral gene transfer between obligate intracellular bacteria: evidence from the Rickettsia massiliae genome.</title>
        <authorList>
            <person name="Blanc G."/>
            <person name="Ogata H."/>
            <person name="Robert C."/>
            <person name="Audic S."/>
            <person name="Claverie J.-M."/>
            <person name="Raoult D."/>
        </authorList>
    </citation>
    <scope>NUCLEOTIDE SEQUENCE [LARGE SCALE GENOMIC DNA]</scope>
    <source>
        <strain>Mtu5</strain>
    </source>
</reference>
<feature type="chain" id="PRO_1000057672" description="Holo-[acyl-carrier-protein] synthase">
    <location>
        <begin position="1"/>
        <end position="131"/>
    </location>
</feature>
<feature type="binding site" evidence="1">
    <location>
        <position position="8"/>
    </location>
    <ligand>
        <name>Mg(2+)</name>
        <dbReference type="ChEBI" id="CHEBI:18420"/>
    </ligand>
</feature>
<feature type="binding site" evidence="1">
    <location>
        <position position="59"/>
    </location>
    <ligand>
        <name>Mg(2+)</name>
        <dbReference type="ChEBI" id="CHEBI:18420"/>
    </ligand>
</feature>
<accession>A8F257</accession>